<comment type="function">
    <text evidence="1">Required for the formation of a threonylcarbamoyl group on adenosine at position 37 (t(6)A37) in tRNAs that read codons beginning with adenine. Is involved in the transfer of the threonylcarbamoyl moiety of threonylcarbamoyl-AMP (TC-AMP) to the N6 group of A37, together with TsaE and TsaB. TsaD likely plays a direct catalytic role in this reaction.</text>
</comment>
<comment type="catalytic activity">
    <reaction evidence="1">
        <text>L-threonylcarbamoyladenylate + adenosine(37) in tRNA = N(6)-L-threonylcarbamoyladenosine(37) in tRNA + AMP + H(+)</text>
        <dbReference type="Rhea" id="RHEA:37059"/>
        <dbReference type="Rhea" id="RHEA-COMP:10162"/>
        <dbReference type="Rhea" id="RHEA-COMP:10163"/>
        <dbReference type="ChEBI" id="CHEBI:15378"/>
        <dbReference type="ChEBI" id="CHEBI:73682"/>
        <dbReference type="ChEBI" id="CHEBI:74411"/>
        <dbReference type="ChEBI" id="CHEBI:74418"/>
        <dbReference type="ChEBI" id="CHEBI:456215"/>
        <dbReference type="EC" id="2.3.1.234"/>
    </reaction>
</comment>
<comment type="cofactor">
    <cofactor evidence="1">
        <name>Fe(2+)</name>
        <dbReference type="ChEBI" id="CHEBI:29033"/>
    </cofactor>
    <text evidence="1">Binds 1 Fe(2+) ion per subunit.</text>
</comment>
<comment type="subcellular location">
    <subcellularLocation>
        <location evidence="1">Cytoplasm</location>
    </subcellularLocation>
</comment>
<comment type="similarity">
    <text evidence="1">Belongs to the KAE1 / TsaD family.</text>
</comment>
<accession>Q72Q12</accession>
<protein>
    <recommendedName>
        <fullName evidence="1">tRNA N6-adenosine threonylcarbamoyltransferase</fullName>
        <ecNumber evidence="1">2.3.1.234</ecNumber>
    </recommendedName>
    <alternativeName>
        <fullName evidence="1">N6-L-threonylcarbamoyladenine synthase</fullName>
        <shortName evidence="1">t(6)A synthase</shortName>
    </alternativeName>
    <alternativeName>
        <fullName evidence="1">t(6)A37 threonylcarbamoyladenosine biosynthesis protein TsaD</fullName>
    </alternativeName>
    <alternativeName>
        <fullName evidence="1">tRNA threonylcarbamoyladenosine biosynthesis protein TsaD</fullName>
    </alternativeName>
</protein>
<sequence length="338" mass="37519">MIGMGIETSCDETSIGIVRDGKDLLSLKIFSQIDLHKPYGGIVPEIASRAHLEKINLLLEEAMEESEIQFKDLSYVAVTSSPGLTGSLMVGAQMARCIHMVYETPILPVCHLQSHFAVLHLEGVPTEFPVLGLLLSGGNSAIYILHEFGKMELLGDTMDDALGEAFDKVAGLLELPYPGGPHIEVRAKEYKPSPNEKPILPALLRNLPQEEVSFSFSGLKTAVMVLLEKQKELSKERICWNFQNSAFDLVERNLKRAVSKTGIKRIFAAGGVLANFTLQNRLYTWAEKNSVELFAPKKKIYCTDNGAMVASLGYYLFQKGYQRDIDFTVSPSRQEIFS</sequence>
<proteinExistence type="inferred from homology"/>
<name>TSAD_LEPIC</name>
<evidence type="ECO:0000255" key="1">
    <source>
        <dbReference type="HAMAP-Rule" id="MF_01445"/>
    </source>
</evidence>
<dbReference type="EC" id="2.3.1.234" evidence="1"/>
<dbReference type="EMBL" id="AE016823">
    <property type="protein sequence ID" value="AAS70873.1"/>
    <property type="molecule type" value="Genomic_DNA"/>
</dbReference>
<dbReference type="RefSeq" id="WP_000579852.1">
    <property type="nucleotide sequence ID" value="NC_005823.1"/>
</dbReference>
<dbReference type="SMR" id="Q72Q12"/>
<dbReference type="GeneID" id="61142186"/>
<dbReference type="KEGG" id="lic:LIC_12302"/>
<dbReference type="HOGENOM" id="CLU_023208_0_2_12"/>
<dbReference type="Proteomes" id="UP000007037">
    <property type="component" value="Chromosome I"/>
</dbReference>
<dbReference type="GO" id="GO:0005737">
    <property type="term" value="C:cytoplasm"/>
    <property type="evidence" value="ECO:0007669"/>
    <property type="project" value="UniProtKB-SubCell"/>
</dbReference>
<dbReference type="GO" id="GO:0005506">
    <property type="term" value="F:iron ion binding"/>
    <property type="evidence" value="ECO:0007669"/>
    <property type="project" value="UniProtKB-UniRule"/>
</dbReference>
<dbReference type="GO" id="GO:0061711">
    <property type="term" value="F:N(6)-L-threonylcarbamoyladenine synthase activity"/>
    <property type="evidence" value="ECO:0007669"/>
    <property type="project" value="UniProtKB-EC"/>
</dbReference>
<dbReference type="GO" id="GO:0002949">
    <property type="term" value="P:tRNA threonylcarbamoyladenosine modification"/>
    <property type="evidence" value="ECO:0007669"/>
    <property type="project" value="UniProtKB-UniRule"/>
</dbReference>
<dbReference type="FunFam" id="3.30.420.40:FF:000360">
    <property type="entry name" value="tRNA N6-adenosine threonylcarbamoyltransferase"/>
    <property type="match status" value="1"/>
</dbReference>
<dbReference type="Gene3D" id="3.30.420.40">
    <property type="match status" value="2"/>
</dbReference>
<dbReference type="HAMAP" id="MF_01445">
    <property type="entry name" value="TsaD"/>
    <property type="match status" value="1"/>
</dbReference>
<dbReference type="InterPro" id="IPR043129">
    <property type="entry name" value="ATPase_NBD"/>
</dbReference>
<dbReference type="InterPro" id="IPR000905">
    <property type="entry name" value="Gcp-like_dom"/>
</dbReference>
<dbReference type="InterPro" id="IPR017861">
    <property type="entry name" value="KAE1/TsaD"/>
</dbReference>
<dbReference type="InterPro" id="IPR022450">
    <property type="entry name" value="TsaD"/>
</dbReference>
<dbReference type="NCBIfam" id="TIGR00329">
    <property type="entry name" value="gcp_kae1"/>
    <property type="match status" value="1"/>
</dbReference>
<dbReference type="NCBIfam" id="TIGR03723">
    <property type="entry name" value="T6A_TsaD_YgjD"/>
    <property type="match status" value="1"/>
</dbReference>
<dbReference type="PANTHER" id="PTHR11735">
    <property type="entry name" value="TRNA N6-ADENOSINE THREONYLCARBAMOYLTRANSFERASE"/>
    <property type="match status" value="1"/>
</dbReference>
<dbReference type="PANTHER" id="PTHR11735:SF6">
    <property type="entry name" value="TRNA N6-ADENOSINE THREONYLCARBAMOYLTRANSFERASE, MITOCHONDRIAL"/>
    <property type="match status" value="1"/>
</dbReference>
<dbReference type="Pfam" id="PF00814">
    <property type="entry name" value="TsaD"/>
    <property type="match status" value="1"/>
</dbReference>
<dbReference type="PRINTS" id="PR00789">
    <property type="entry name" value="OSIALOPTASE"/>
</dbReference>
<dbReference type="SUPFAM" id="SSF53067">
    <property type="entry name" value="Actin-like ATPase domain"/>
    <property type="match status" value="1"/>
</dbReference>
<feature type="chain" id="PRO_0000303410" description="tRNA N6-adenosine threonylcarbamoyltransferase">
    <location>
        <begin position="1"/>
        <end position="338"/>
    </location>
</feature>
<feature type="binding site" evidence="1">
    <location>
        <position position="111"/>
    </location>
    <ligand>
        <name>Fe cation</name>
        <dbReference type="ChEBI" id="CHEBI:24875"/>
    </ligand>
</feature>
<feature type="binding site" evidence="1">
    <location>
        <position position="115"/>
    </location>
    <ligand>
        <name>Fe cation</name>
        <dbReference type="ChEBI" id="CHEBI:24875"/>
    </ligand>
</feature>
<feature type="binding site" evidence="1">
    <location>
        <begin position="134"/>
        <end position="138"/>
    </location>
    <ligand>
        <name>substrate</name>
    </ligand>
</feature>
<feature type="binding site" evidence="1">
    <location>
        <position position="167"/>
    </location>
    <ligand>
        <name>substrate</name>
    </ligand>
</feature>
<feature type="binding site" evidence="1">
    <location>
        <position position="180"/>
    </location>
    <ligand>
        <name>substrate</name>
    </ligand>
</feature>
<feature type="binding site" evidence="1">
    <location>
        <position position="275"/>
    </location>
    <ligand>
        <name>substrate</name>
    </ligand>
</feature>
<feature type="binding site" evidence="1">
    <location>
        <position position="304"/>
    </location>
    <ligand>
        <name>Fe cation</name>
        <dbReference type="ChEBI" id="CHEBI:24875"/>
    </ligand>
</feature>
<reference key="1">
    <citation type="journal article" date="2004" name="J. Bacteriol.">
        <title>Comparative genomics of two Leptospira interrogans serovars reveals novel insights into physiology and pathogenesis.</title>
        <authorList>
            <person name="Nascimento A.L.T.O."/>
            <person name="Ko A.I."/>
            <person name="Martins E.A.L."/>
            <person name="Monteiro-Vitorello C.B."/>
            <person name="Ho P.L."/>
            <person name="Haake D.A."/>
            <person name="Verjovski-Almeida S."/>
            <person name="Hartskeerl R.A."/>
            <person name="Marques M.V."/>
            <person name="Oliveira M.C."/>
            <person name="Menck C.F.M."/>
            <person name="Leite L.C.C."/>
            <person name="Carrer H."/>
            <person name="Coutinho L.L."/>
            <person name="Degrave W.M."/>
            <person name="Dellagostin O.A."/>
            <person name="El-Dorry H."/>
            <person name="Ferro E.S."/>
            <person name="Ferro M.I.T."/>
            <person name="Furlan L.R."/>
            <person name="Gamberini M."/>
            <person name="Giglioti E.A."/>
            <person name="Goes-Neto A."/>
            <person name="Goldman G.H."/>
            <person name="Goldman M.H.S."/>
            <person name="Harakava R."/>
            <person name="Jeronimo S.M.B."/>
            <person name="Junqueira-de-Azevedo I.L.M."/>
            <person name="Kimura E.T."/>
            <person name="Kuramae E.E."/>
            <person name="Lemos E.G.M."/>
            <person name="Lemos M.V.F."/>
            <person name="Marino C.L."/>
            <person name="Nunes L.R."/>
            <person name="de Oliveira R.C."/>
            <person name="Pereira G.G."/>
            <person name="Reis M.S."/>
            <person name="Schriefer A."/>
            <person name="Siqueira W.J."/>
            <person name="Sommer P."/>
            <person name="Tsai S.M."/>
            <person name="Simpson A.J.G."/>
            <person name="Ferro J.A."/>
            <person name="Camargo L.E.A."/>
            <person name="Kitajima J.P."/>
            <person name="Setubal J.C."/>
            <person name="Van Sluys M.A."/>
        </authorList>
    </citation>
    <scope>NUCLEOTIDE SEQUENCE [LARGE SCALE GENOMIC DNA]</scope>
    <source>
        <strain>Fiocruz L1-130</strain>
    </source>
</reference>
<keyword id="KW-0012">Acyltransferase</keyword>
<keyword id="KW-0963">Cytoplasm</keyword>
<keyword id="KW-0408">Iron</keyword>
<keyword id="KW-0479">Metal-binding</keyword>
<keyword id="KW-0808">Transferase</keyword>
<keyword id="KW-0819">tRNA processing</keyword>
<organism>
    <name type="scientific">Leptospira interrogans serogroup Icterohaemorrhagiae serovar copenhageni (strain Fiocruz L1-130)</name>
    <dbReference type="NCBI Taxonomy" id="267671"/>
    <lineage>
        <taxon>Bacteria</taxon>
        <taxon>Pseudomonadati</taxon>
        <taxon>Spirochaetota</taxon>
        <taxon>Spirochaetia</taxon>
        <taxon>Leptospirales</taxon>
        <taxon>Leptospiraceae</taxon>
        <taxon>Leptospira</taxon>
    </lineage>
</organism>
<gene>
    <name evidence="1" type="primary">tsaD</name>
    <name type="synonym">gcp</name>
    <name type="ordered locus">LIC_12302</name>
</gene>